<proteinExistence type="inferred from homology"/>
<protein>
    <recommendedName>
        <fullName evidence="1">Protein translocase subunit SecA</fullName>
        <ecNumber evidence="1">7.4.2.8</ecNumber>
    </recommendedName>
</protein>
<evidence type="ECO:0000255" key="1">
    <source>
        <dbReference type="HAMAP-Rule" id="MF_01382"/>
    </source>
</evidence>
<dbReference type="EC" id="7.4.2.8" evidence="1"/>
<dbReference type="EMBL" id="CP000872">
    <property type="protein sequence ID" value="ABX62979.1"/>
    <property type="molecule type" value="Genomic_DNA"/>
</dbReference>
<dbReference type="RefSeq" id="WP_004692106.1">
    <property type="nucleotide sequence ID" value="NC_010103.1"/>
</dbReference>
<dbReference type="SMR" id="A9M8T1"/>
<dbReference type="GeneID" id="55591531"/>
<dbReference type="KEGG" id="bcs:BCAN_A1989"/>
<dbReference type="HOGENOM" id="CLU_005314_3_0_5"/>
<dbReference type="PhylomeDB" id="A9M8T1"/>
<dbReference type="Proteomes" id="UP000001385">
    <property type="component" value="Chromosome I"/>
</dbReference>
<dbReference type="GO" id="GO:0031522">
    <property type="term" value="C:cell envelope Sec protein transport complex"/>
    <property type="evidence" value="ECO:0007669"/>
    <property type="project" value="TreeGrafter"/>
</dbReference>
<dbReference type="GO" id="GO:0005829">
    <property type="term" value="C:cytosol"/>
    <property type="evidence" value="ECO:0007669"/>
    <property type="project" value="TreeGrafter"/>
</dbReference>
<dbReference type="GO" id="GO:0005886">
    <property type="term" value="C:plasma membrane"/>
    <property type="evidence" value="ECO:0007669"/>
    <property type="project" value="UniProtKB-SubCell"/>
</dbReference>
<dbReference type="GO" id="GO:0005524">
    <property type="term" value="F:ATP binding"/>
    <property type="evidence" value="ECO:0007669"/>
    <property type="project" value="UniProtKB-UniRule"/>
</dbReference>
<dbReference type="GO" id="GO:0046872">
    <property type="term" value="F:metal ion binding"/>
    <property type="evidence" value="ECO:0007669"/>
    <property type="project" value="UniProtKB-KW"/>
</dbReference>
<dbReference type="GO" id="GO:0008564">
    <property type="term" value="F:protein-exporting ATPase activity"/>
    <property type="evidence" value="ECO:0007669"/>
    <property type="project" value="UniProtKB-EC"/>
</dbReference>
<dbReference type="GO" id="GO:0065002">
    <property type="term" value="P:intracellular protein transmembrane transport"/>
    <property type="evidence" value="ECO:0007669"/>
    <property type="project" value="UniProtKB-UniRule"/>
</dbReference>
<dbReference type="GO" id="GO:0017038">
    <property type="term" value="P:protein import"/>
    <property type="evidence" value="ECO:0007669"/>
    <property type="project" value="InterPro"/>
</dbReference>
<dbReference type="GO" id="GO:0006605">
    <property type="term" value="P:protein targeting"/>
    <property type="evidence" value="ECO:0007669"/>
    <property type="project" value="UniProtKB-UniRule"/>
</dbReference>
<dbReference type="GO" id="GO:0043952">
    <property type="term" value="P:protein transport by the Sec complex"/>
    <property type="evidence" value="ECO:0007669"/>
    <property type="project" value="TreeGrafter"/>
</dbReference>
<dbReference type="CDD" id="cd17928">
    <property type="entry name" value="DEXDc_SecA"/>
    <property type="match status" value="1"/>
</dbReference>
<dbReference type="CDD" id="cd18803">
    <property type="entry name" value="SF2_C_secA"/>
    <property type="match status" value="1"/>
</dbReference>
<dbReference type="FunFam" id="3.90.1440.10:FF:000001">
    <property type="entry name" value="Preprotein translocase subunit SecA"/>
    <property type="match status" value="1"/>
</dbReference>
<dbReference type="FunFam" id="1.10.3060.10:FF:000003">
    <property type="entry name" value="Protein translocase subunit SecA"/>
    <property type="match status" value="1"/>
</dbReference>
<dbReference type="FunFam" id="3.40.50.300:FF:000334">
    <property type="entry name" value="Protein translocase subunit SecA"/>
    <property type="match status" value="1"/>
</dbReference>
<dbReference type="FunFam" id="3.40.50.300:FF:001790">
    <property type="entry name" value="Protein translocase subunit SecA"/>
    <property type="match status" value="1"/>
</dbReference>
<dbReference type="Gene3D" id="3.10.450.50">
    <property type="match status" value="1"/>
</dbReference>
<dbReference type="Gene3D" id="1.10.3060.10">
    <property type="entry name" value="Helical scaffold and wing domains of SecA"/>
    <property type="match status" value="1"/>
</dbReference>
<dbReference type="Gene3D" id="3.40.50.300">
    <property type="entry name" value="P-loop containing nucleotide triphosphate hydrolases"/>
    <property type="match status" value="2"/>
</dbReference>
<dbReference type="Gene3D" id="3.90.1440.10">
    <property type="entry name" value="SecA, preprotein cross-linking domain"/>
    <property type="match status" value="1"/>
</dbReference>
<dbReference type="HAMAP" id="MF_01382">
    <property type="entry name" value="SecA"/>
    <property type="match status" value="1"/>
</dbReference>
<dbReference type="InterPro" id="IPR014001">
    <property type="entry name" value="Helicase_ATP-bd"/>
</dbReference>
<dbReference type="InterPro" id="IPR001650">
    <property type="entry name" value="Helicase_C-like"/>
</dbReference>
<dbReference type="InterPro" id="IPR027417">
    <property type="entry name" value="P-loop_NTPase"/>
</dbReference>
<dbReference type="InterPro" id="IPR004027">
    <property type="entry name" value="SEC_C_motif"/>
</dbReference>
<dbReference type="InterPro" id="IPR000185">
    <property type="entry name" value="SecA"/>
</dbReference>
<dbReference type="InterPro" id="IPR020937">
    <property type="entry name" value="SecA_CS"/>
</dbReference>
<dbReference type="InterPro" id="IPR011115">
    <property type="entry name" value="SecA_DEAD"/>
</dbReference>
<dbReference type="InterPro" id="IPR014018">
    <property type="entry name" value="SecA_motor_DEAD"/>
</dbReference>
<dbReference type="InterPro" id="IPR011130">
    <property type="entry name" value="SecA_preprotein_X-link_dom"/>
</dbReference>
<dbReference type="InterPro" id="IPR044722">
    <property type="entry name" value="SecA_SF2_C"/>
</dbReference>
<dbReference type="InterPro" id="IPR011116">
    <property type="entry name" value="SecA_Wing/Scaffold"/>
</dbReference>
<dbReference type="InterPro" id="IPR036266">
    <property type="entry name" value="SecA_Wing/Scaffold_sf"/>
</dbReference>
<dbReference type="InterPro" id="IPR036670">
    <property type="entry name" value="SecA_X-link_sf"/>
</dbReference>
<dbReference type="NCBIfam" id="NF009538">
    <property type="entry name" value="PRK12904.1"/>
    <property type="match status" value="1"/>
</dbReference>
<dbReference type="NCBIfam" id="TIGR00963">
    <property type="entry name" value="secA"/>
    <property type="match status" value="1"/>
</dbReference>
<dbReference type="PANTHER" id="PTHR30612:SF0">
    <property type="entry name" value="CHLOROPLAST PROTEIN-TRANSPORTING ATPASE"/>
    <property type="match status" value="1"/>
</dbReference>
<dbReference type="PANTHER" id="PTHR30612">
    <property type="entry name" value="SECA INNER MEMBRANE COMPONENT OF SEC PROTEIN SECRETION SYSTEM"/>
    <property type="match status" value="1"/>
</dbReference>
<dbReference type="Pfam" id="PF21090">
    <property type="entry name" value="P-loop_SecA"/>
    <property type="match status" value="1"/>
</dbReference>
<dbReference type="Pfam" id="PF02810">
    <property type="entry name" value="SEC-C"/>
    <property type="match status" value="1"/>
</dbReference>
<dbReference type="Pfam" id="PF07517">
    <property type="entry name" value="SecA_DEAD"/>
    <property type="match status" value="1"/>
</dbReference>
<dbReference type="Pfam" id="PF01043">
    <property type="entry name" value="SecA_PP_bind"/>
    <property type="match status" value="1"/>
</dbReference>
<dbReference type="Pfam" id="PF07516">
    <property type="entry name" value="SecA_SW"/>
    <property type="match status" value="1"/>
</dbReference>
<dbReference type="PRINTS" id="PR00906">
    <property type="entry name" value="SECA"/>
</dbReference>
<dbReference type="SMART" id="SM00957">
    <property type="entry name" value="SecA_DEAD"/>
    <property type="match status" value="1"/>
</dbReference>
<dbReference type="SMART" id="SM00958">
    <property type="entry name" value="SecA_PP_bind"/>
    <property type="match status" value="1"/>
</dbReference>
<dbReference type="SUPFAM" id="SSF81886">
    <property type="entry name" value="Helical scaffold and wing domains of SecA"/>
    <property type="match status" value="1"/>
</dbReference>
<dbReference type="SUPFAM" id="SSF52540">
    <property type="entry name" value="P-loop containing nucleoside triphosphate hydrolases"/>
    <property type="match status" value="2"/>
</dbReference>
<dbReference type="SUPFAM" id="SSF81767">
    <property type="entry name" value="Pre-protein crosslinking domain of SecA"/>
    <property type="match status" value="1"/>
</dbReference>
<dbReference type="PROSITE" id="PS01312">
    <property type="entry name" value="SECA"/>
    <property type="match status" value="1"/>
</dbReference>
<dbReference type="PROSITE" id="PS51196">
    <property type="entry name" value="SECA_MOTOR_DEAD"/>
    <property type="match status" value="1"/>
</dbReference>
<sequence length="906" mass="102772">MVSFGGLARKIFGSSNDRRVKTLRQRAEQITALEKNYENLTDEQLQAKTAEFRAALAEGKSLDSLLPDAFATAREAAKRVLGMRPFDVQLIGGMVLHERGIAEMRTGEGKTLMATLPVYLNALEGKGVHVVTVNDYLATRDAETMGRLYNFLGLTVGVIKHGLDDDERRAAYACDITYGTNNELGFDYLRDNMKYERAQMVQRPHNYAIVDEVDSILIDEARTPLIISGPLEDRSDFYNLIDTFIPPLAEEDYEVDEKQKTAIFTEVGTEKVEKLLEAAGHLKGESLYDIENVAVVHHLNNALRAHKLFQRDKDYIVRNDEIVIIDEFTGRMMPGRRYSEGLHQALEAKEHVTIQPENQTLASITFQNYFRMYNKLSGMTGTAATEAEEFGNIYGLEVLEIPTNLPVQRIDEDDEVYRTVEEKYRAIVRDIRASHEKGQPILVGTTSIEKSEQLAERLRREGIKGFQVLNARYHEQEAYIIAQAGVPGAVTIATNMAGRGTDIQLGGNLEMRVRQELSDVPEGPEREEKIAAIKADIAQLKEKALAAGGLYVLATERHESRRIDNQLRGRSGRQGDPGRSKFFLSLQDDLMRIFGSDRMDGMLQKLGLKEDEAIVHPWINKALEKAQKKVEARNFEIRKNLLKYDDVMNDQRKVIFEQRLEMMDEEDLTETVAEMRHEVIEDMVILRIPKDAYAEKWDIAGLKQDIASKLNLDLPVEEWAKEEGIAEEEFENRIKEAADKAAAEKAERFGPQIMTYVEKSVIMQSLDNLWREHLVNLDHLRSVVGFRGYAQRDPLNEYKTEAFELFQTMLANLREVVISQLMRVEIVGEAPPEPQLPPMAGLHIDGTTGENDFDEAIWAEHQHDDRIVPPAQRDPADPRTWGKVSRNEPCPCGSGKKYKHCHGAFE</sequence>
<name>SECA_BRUC2</name>
<accession>A9M8T1</accession>
<gene>
    <name evidence="1" type="primary">secA</name>
    <name type="ordered locus">BCAN_A1989</name>
</gene>
<keyword id="KW-0067">ATP-binding</keyword>
<keyword id="KW-0997">Cell inner membrane</keyword>
<keyword id="KW-1003">Cell membrane</keyword>
<keyword id="KW-0963">Cytoplasm</keyword>
<keyword id="KW-0472">Membrane</keyword>
<keyword id="KW-0479">Metal-binding</keyword>
<keyword id="KW-0547">Nucleotide-binding</keyword>
<keyword id="KW-0653">Protein transport</keyword>
<keyword id="KW-1185">Reference proteome</keyword>
<keyword id="KW-1278">Translocase</keyword>
<keyword id="KW-0811">Translocation</keyword>
<keyword id="KW-0813">Transport</keyword>
<keyword id="KW-0862">Zinc</keyword>
<feature type="chain" id="PRO_1000087307" description="Protein translocase subunit SecA">
    <location>
        <begin position="1"/>
        <end position="906"/>
    </location>
</feature>
<feature type="binding site" evidence="1">
    <location>
        <position position="89"/>
    </location>
    <ligand>
        <name>ATP</name>
        <dbReference type="ChEBI" id="CHEBI:30616"/>
    </ligand>
</feature>
<feature type="binding site" evidence="1">
    <location>
        <begin position="107"/>
        <end position="111"/>
    </location>
    <ligand>
        <name>ATP</name>
        <dbReference type="ChEBI" id="CHEBI:30616"/>
    </ligand>
</feature>
<feature type="binding site" evidence="1">
    <location>
        <position position="502"/>
    </location>
    <ligand>
        <name>ATP</name>
        <dbReference type="ChEBI" id="CHEBI:30616"/>
    </ligand>
</feature>
<feature type="binding site" evidence="1">
    <location>
        <position position="890"/>
    </location>
    <ligand>
        <name>Zn(2+)</name>
        <dbReference type="ChEBI" id="CHEBI:29105"/>
    </ligand>
</feature>
<feature type="binding site" evidence="1">
    <location>
        <position position="892"/>
    </location>
    <ligand>
        <name>Zn(2+)</name>
        <dbReference type="ChEBI" id="CHEBI:29105"/>
    </ligand>
</feature>
<feature type="binding site" evidence="1">
    <location>
        <position position="901"/>
    </location>
    <ligand>
        <name>Zn(2+)</name>
        <dbReference type="ChEBI" id="CHEBI:29105"/>
    </ligand>
</feature>
<feature type="binding site" evidence="1">
    <location>
        <position position="902"/>
    </location>
    <ligand>
        <name>Zn(2+)</name>
        <dbReference type="ChEBI" id="CHEBI:29105"/>
    </ligand>
</feature>
<comment type="function">
    <text evidence="1">Part of the Sec protein translocase complex. Interacts with the SecYEG preprotein conducting channel. Has a central role in coupling the hydrolysis of ATP to the transfer of proteins into and across the cell membrane, serving both as a receptor for the preprotein-SecB complex and as an ATP-driven molecular motor driving the stepwise translocation of polypeptide chains across the membrane.</text>
</comment>
<comment type="catalytic activity">
    <reaction evidence="1">
        <text>ATP + H2O + cellular proteinSide 1 = ADP + phosphate + cellular proteinSide 2.</text>
        <dbReference type="EC" id="7.4.2.8"/>
    </reaction>
</comment>
<comment type="cofactor">
    <cofactor evidence="1">
        <name>Zn(2+)</name>
        <dbReference type="ChEBI" id="CHEBI:29105"/>
    </cofactor>
    <text evidence="1">May bind 1 zinc ion per subunit.</text>
</comment>
<comment type="subunit">
    <text evidence="1">Monomer and homodimer. Part of the essential Sec protein translocation apparatus which comprises SecA, SecYEG and auxiliary proteins SecDF-YajC and YidC.</text>
</comment>
<comment type="subcellular location">
    <subcellularLocation>
        <location evidence="1">Cell inner membrane</location>
        <topology evidence="1">Peripheral membrane protein</topology>
        <orientation evidence="1">Cytoplasmic side</orientation>
    </subcellularLocation>
    <subcellularLocation>
        <location evidence="1">Cytoplasm</location>
    </subcellularLocation>
    <text evidence="1">Distribution is 50-50.</text>
</comment>
<comment type="similarity">
    <text evidence="1">Belongs to the SecA family.</text>
</comment>
<reference key="1">
    <citation type="submission" date="2007-10" db="EMBL/GenBank/DDBJ databases">
        <title>Brucella canis ATCC 23365 whole genome shotgun sequencing project.</title>
        <authorList>
            <person name="Setubal J.C."/>
            <person name="Bowns C."/>
            <person name="Boyle S."/>
            <person name="Crasta O.R."/>
            <person name="Czar M.J."/>
            <person name="Dharmanolla C."/>
            <person name="Gillespie J.J."/>
            <person name="Kenyon R.W."/>
            <person name="Lu J."/>
            <person name="Mane S."/>
            <person name="Mohapatra S."/>
            <person name="Nagrani S."/>
            <person name="Purkayastha A."/>
            <person name="Rajasimha H.K."/>
            <person name="Shallom J.M."/>
            <person name="Shallom S."/>
            <person name="Shukla M."/>
            <person name="Snyder E.E."/>
            <person name="Sobral B.W."/>
            <person name="Wattam A.R."/>
            <person name="Will R."/>
            <person name="Williams K."/>
            <person name="Yoo H."/>
            <person name="Bruce D."/>
            <person name="Detter C."/>
            <person name="Munk C."/>
            <person name="Brettin T.S."/>
        </authorList>
    </citation>
    <scope>NUCLEOTIDE SEQUENCE [LARGE SCALE GENOMIC DNA]</scope>
    <source>
        <strain>ATCC 23365 / NCTC 10854 / RM-666</strain>
    </source>
</reference>
<organism>
    <name type="scientific">Brucella canis (strain ATCC 23365 / NCTC 10854 / RM-666)</name>
    <dbReference type="NCBI Taxonomy" id="483179"/>
    <lineage>
        <taxon>Bacteria</taxon>
        <taxon>Pseudomonadati</taxon>
        <taxon>Pseudomonadota</taxon>
        <taxon>Alphaproteobacteria</taxon>
        <taxon>Hyphomicrobiales</taxon>
        <taxon>Brucellaceae</taxon>
        <taxon>Brucella/Ochrobactrum group</taxon>
        <taxon>Brucella</taxon>
    </lineage>
</organism>